<dbReference type="EC" id="3.4.23.24" evidence="11 16"/>
<dbReference type="EMBL" id="Z30192">
    <property type="protein sequence ID" value="CAA82924.1"/>
    <property type="molecule type" value="Genomic_DNA"/>
</dbReference>
<dbReference type="PIR" id="S49057">
    <property type="entry name" value="S42073"/>
</dbReference>
<dbReference type="SMR" id="P43095"/>
<dbReference type="ChEMBL" id="CHEMBL6178"/>
<dbReference type="MEROPS" id="A01.064"/>
<dbReference type="GlyCosmos" id="P43095">
    <property type="glycosylation" value="1 site, No reported glycans"/>
</dbReference>
<dbReference type="VEuPathDB" id="FungiDB:C6_02710C_A"/>
<dbReference type="VEuPathDB" id="FungiDB:CAWG_05098"/>
<dbReference type="BRENDA" id="3.4.23.24">
    <property type="organism ID" value="1096"/>
</dbReference>
<dbReference type="PHI-base" id="PHI:127"/>
<dbReference type="GO" id="GO:0005576">
    <property type="term" value="C:extracellular region"/>
    <property type="evidence" value="ECO:0007669"/>
    <property type="project" value="UniProtKB-SubCell"/>
</dbReference>
<dbReference type="GO" id="GO:0009277">
    <property type="term" value="C:fungal-type cell wall"/>
    <property type="evidence" value="ECO:0007669"/>
    <property type="project" value="TreeGrafter"/>
</dbReference>
<dbReference type="GO" id="GO:0004190">
    <property type="term" value="F:aspartic-type endopeptidase activity"/>
    <property type="evidence" value="ECO:0007669"/>
    <property type="project" value="UniProtKB-KW"/>
</dbReference>
<dbReference type="GO" id="GO:0046872">
    <property type="term" value="F:metal ion binding"/>
    <property type="evidence" value="ECO:0007669"/>
    <property type="project" value="UniProtKB-KW"/>
</dbReference>
<dbReference type="GO" id="GO:0031505">
    <property type="term" value="P:fungal-type cell wall organization"/>
    <property type="evidence" value="ECO:0007669"/>
    <property type="project" value="TreeGrafter"/>
</dbReference>
<dbReference type="GO" id="GO:0006508">
    <property type="term" value="P:proteolysis"/>
    <property type="evidence" value="ECO:0007669"/>
    <property type="project" value="UniProtKB-KW"/>
</dbReference>
<dbReference type="CDD" id="cd05474">
    <property type="entry name" value="SAP_like"/>
    <property type="match status" value="1"/>
</dbReference>
<dbReference type="FunFam" id="2.40.70.10:FF:000011">
    <property type="entry name" value="Aspartic protease"/>
    <property type="match status" value="1"/>
</dbReference>
<dbReference type="FunFam" id="2.40.70.10:FF:000023">
    <property type="entry name" value="Aspartic protease"/>
    <property type="match status" value="1"/>
</dbReference>
<dbReference type="Gene3D" id="2.40.70.10">
    <property type="entry name" value="Acid Proteases"/>
    <property type="match status" value="2"/>
</dbReference>
<dbReference type="InterPro" id="IPR001461">
    <property type="entry name" value="Aspartic_peptidase_A1"/>
</dbReference>
<dbReference type="InterPro" id="IPR001969">
    <property type="entry name" value="Aspartic_peptidase_AS"/>
</dbReference>
<dbReference type="InterPro" id="IPR033121">
    <property type="entry name" value="PEPTIDASE_A1"/>
</dbReference>
<dbReference type="InterPro" id="IPR021109">
    <property type="entry name" value="Peptidase_aspartic_dom_sf"/>
</dbReference>
<dbReference type="InterPro" id="IPR033876">
    <property type="entry name" value="SAP-like"/>
</dbReference>
<dbReference type="PANTHER" id="PTHR47965:SF12">
    <property type="entry name" value="ASPARTIC PROTEINASE 3-RELATED"/>
    <property type="match status" value="1"/>
</dbReference>
<dbReference type="PANTHER" id="PTHR47965">
    <property type="entry name" value="ASPARTYL PROTEASE-RELATED"/>
    <property type="match status" value="1"/>
</dbReference>
<dbReference type="Pfam" id="PF00026">
    <property type="entry name" value="Asp"/>
    <property type="match status" value="1"/>
</dbReference>
<dbReference type="PRINTS" id="PR00792">
    <property type="entry name" value="PEPSIN"/>
</dbReference>
<dbReference type="SUPFAM" id="SSF50630">
    <property type="entry name" value="Acid proteases"/>
    <property type="match status" value="1"/>
</dbReference>
<dbReference type="PROSITE" id="PS00141">
    <property type="entry name" value="ASP_PROTEASE"/>
    <property type="match status" value="2"/>
</dbReference>
<dbReference type="PROSITE" id="PS51767">
    <property type="entry name" value="PEPTIDASE_A1"/>
    <property type="match status" value="1"/>
</dbReference>
<accession>P43095</accession>
<name>CARP6_CANAX</name>
<comment type="function">
    <text evidence="6 7 8 9 10 12 15">Secreted aspartic peptidases (SAPs) are a group of ten acidic hydrolases considered as key virulence factors (PubMed:11478679, PubMed:12065511, PubMed:17652724, PubMed:20713630, PubMed:21540243, PubMed:22302440). These enzymes supply the fungus with nutrient amino acids as well as are able to degrade the selected host's proteins involved in the immune defense (PubMed:11478679, PubMed:12065511, PubMed:17652724, PubMed:20713630, PubMed:21540243, PubMed:22302440). Moreover, acts toward human hemoglobin though limited proteolysis to generate a variety of antimicrobial hemocidins, enabling to compete with the other microorganisms of the same physiological niche using the microbicidal peptides generated from the host protein (PubMed:23927842).</text>
</comment>
<comment type="catalytic activity">
    <reaction evidence="11 16">
        <text>Preferential cleavage at the carboxyl of hydrophobic amino acids, but fails to cleave 15-Leu-|-Tyr-16, 16-Tyr-|-Leu-17 and 24-Phe-|-Phe-25 of insulin B chain. Activates trypsinogen, and degrades keratin.</text>
        <dbReference type="EC" id="3.4.23.24"/>
    </reaction>
</comment>
<comment type="activity regulation">
    <text evidence="13">Inhibited by pepstatin A analogs.</text>
</comment>
<comment type="biophysicochemical properties">
    <phDependence>
        <text evidence="11 16">Optimum pH is 5.0.</text>
    </phDependence>
</comment>
<comment type="subcellular location">
    <subcellularLocation>
        <location evidence="1">Secreted</location>
    </subcellularLocation>
</comment>
<comment type="induction">
    <text evidence="12 14">Expressed during development of germ tubes, pseudohyphae and true hyphae (PubMed:23484407). Expressed in greater amounts in the mature biofilms compared to early biofilms during inflammatory disorder of the palatal mucosa among denture wearers (PubMed:22302440).</text>
</comment>
<comment type="similarity">
    <text evidence="18">Belongs to the peptidase A1 family.</text>
</comment>
<proteinExistence type="evidence at protein level"/>
<reference key="1">
    <citation type="journal article" date="1994" name="Mol. Microbiol.">
        <title>Multiplicity of genes encoding secreted aspartic proteinases in Candida species.</title>
        <authorList>
            <person name="Monod M."/>
            <person name="Togni G."/>
            <person name="Hube B."/>
            <person name="Sanglard D."/>
        </authorList>
    </citation>
    <scope>NUCLEOTIDE SEQUENCE [GENOMIC DNA]</scope>
    <source>
        <strain>C74</strain>
    </source>
</reference>
<reference key="2">
    <citation type="journal article" date="1997" name="Microbiology">
        <title>Analysis of secreted aspartic proteinases from Candida albicans: purification and characterization of individual Sap1, Sap2 and Sap3 isoenzymes.</title>
        <authorList>
            <person name="Smolenski G."/>
            <person name="Sullivan P.A."/>
            <person name="Cutfield S.M."/>
            <person name="Cutfield J.F."/>
        </authorList>
    </citation>
    <scope>CATALYTIC ACTIVITY</scope>
    <scope>BIOPHYSICOCHEMICAL PROPERTIES</scope>
</reference>
<reference key="3">
    <citation type="journal article" date="2001" name="J. Med. Microbiol.">
        <title>Different isoforms of secreted aspartyl proteinases (Sap) are expressed by Candida albicans during oral and cutaneous candidosis in vivo.</title>
        <authorList>
            <person name="Schaller M."/>
            <person name="Januschke E."/>
            <person name="Schackert C."/>
            <person name="Woerle B."/>
            <person name="Korting H.C."/>
        </authorList>
    </citation>
    <scope>FUNCTION</scope>
</reference>
<reference key="4">
    <citation type="journal article" date="2002" name="Infect. Immun.">
        <title>Candida albicans hyphal formation and the expression of the Efg1-regulated proteinases Sap4 to Sap6 are required for the invasion of parenchymal organs.</title>
        <authorList>
            <person name="Felk A."/>
            <person name="Kretschmar M."/>
            <person name="Albrecht A."/>
            <person name="Schaller M."/>
            <person name="Beinhauer S."/>
            <person name="Nichterlein T."/>
            <person name="Sanglard D."/>
            <person name="Korting H.C."/>
            <person name="Schafer W."/>
            <person name="Hube B."/>
        </authorList>
    </citation>
    <scope>FUNCTION</scope>
</reference>
<reference key="5">
    <citation type="journal article" date="2007" name="Invest. Ophthalmol. Vis. Sci.">
        <title>The role of secreted aspartyl proteinases in Candida albicans keratitis.</title>
        <authorList>
            <person name="Jackson B.E."/>
            <person name="Wilhelmus K.R."/>
            <person name="Hube B."/>
        </authorList>
    </citation>
    <scope>FUNCTION</scope>
</reference>
<reference key="6">
    <citation type="journal article" date="2010" name="Infect. Immun.">
        <title>The inflammatory response induced by aspartic proteases of Candida albicans is independent of proteolytic activity.</title>
        <authorList>
            <person name="Pietrella D."/>
            <person name="Rachini A."/>
            <person name="Pandey N."/>
            <person name="Schild L."/>
            <person name="Netea M."/>
            <person name="Bistoni F."/>
            <person name="Hube B."/>
            <person name="Vecchiarelli A."/>
        </authorList>
    </citation>
    <scope>FUNCTION</scope>
</reference>
<reference key="7">
    <citation type="journal article" date="2011" name="Dis. Model. Mech.">
        <title>Pathogen and host factors are needed to provoke a systemic host response to gastrointestinal infection of Drosophila larvae by Candida albicans.</title>
        <authorList>
            <person name="Glittenberg M.T."/>
            <person name="Kounatidis I."/>
            <person name="Christensen D."/>
            <person name="Kostov M."/>
            <person name="Kimber S."/>
            <person name="Roberts I."/>
            <person name="Ligoxygakis P."/>
        </authorList>
    </citation>
    <scope>FUNCTION</scope>
</reference>
<reference key="8">
    <citation type="journal article" date="2011" name="J. Biochem.">
        <title>Comprehensive characterization of secreted aspartic proteases encoded by a virulence gene family in Candida albicans.</title>
        <authorList>
            <person name="Aoki W."/>
            <person name="Kitahara N."/>
            <person name="Miura N."/>
            <person name="Morisaka H."/>
            <person name="Yamamoto Y."/>
            <person name="Kuroda K."/>
            <person name="Ueda M."/>
        </authorList>
    </citation>
    <scope>CATALYTIC ACTIVITY</scope>
    <scope>BIOPHYSICOCHEMICAL PROPERTIES</scope>
</reference>
<reference key="9">
    <citation type="journal article" date="2012" name="Mycopathologia">
        <title>In vitro Candida albicans biofilm induced proteinase activity and SAP8 expression correlates with in vivo denture stomatitis severity.</title>
        <authorList>
            <person name="Ramage G."/>
            <person name="Coco B."/>
            <person name="Sherry L."/>
            <person name="Bagg J."/>
            <person name="Lappin D.F."/>
        </authorList>
    </citation>
    <scope>FUNCTION</scope>
    <scope>INDUCTION</scope>
</reference>
<reference key="10">
    <citation type="journal article" date="2012" name="Pol. J. Microbiol.">
        <title>In vitro study of secreted aspartyl proteinases Sap1 to Sap3 and Sap4 to Sap6 expression in Candida albicans pleomorphic forms.</title>
        <authorList>
            <person name="Staniszewska M."/>
            <person name="Bondaryk M."/>
            <person name="Siennicka K."/>
            <person name="Kurek A."/>
            <person name="Orlowski J."/>
            <person name="Schaller M."/>
            <person name="Kurzatkowski W."/>
        </authorList>
    </citation>
    <scope>INDUCTION</scope>
</reference>
<reference key="11">
    <citation type="journal article" date="2013" name="Biochem. Pharmacol.">
        <title>Design, synthesis, inhibition studies, and molecular modeling of pepstatin analogues addressing different secreted aspartic proteinases of Candida albicans.</title>
        <authorList>
            <person name="Cadicamo C.D."/>
            <person name="Mortier J."/>
            <person name="Wolber G."/>
            <person name="Hell M."/>
            <person name="Heinrich I.E."/>
            <person name="Michel D."/>
            <person name="Semlin L."/>
            <person name="Berger U."/>
            <person name="Korting H.C."/>
            <person name="Holtje H.D."/>
            <person name="Koksch B."/>
            <person name="Borelli C."/>
        </authorList>
    </citation>
    <scope>ACTIVITY REGULATION</scope>
</reference>
<reference key="12">
    <citation type="journal article" date="2013" name="Peptides">
        <title>Secreted aspartic peptidases of Candida albicans liberate bactericidal hemocidins from human hemoglobin.</title>
        <authorList>
            <person name="Bochenska O."/>
            <person name="Rapala-Kozik M."/>
            <person name="Wolak N."/>
            <person name="Bras G."/>
            <person name="Kozik A."/>
            <person name="Dubin A."/>
            <person name="Aoki W."/>
            <person name="Ueda M."/>
            <person name="Mak P."/>
        </authorList>
    </citation>
    <scope>FUNCTION</scope>
</reference>
<keyword id="KW-0064">Aspartyl protease</keyword>
<keyword id="KW-0165">Cleavage on pair of basic residues</keyword>
<keyword id="KW-1015">Disulfide bond</keyword>
<keyword id="KW-0325">Glycoprotein</keyword>
<keyword id="KW-0378">Hydrolase</keyword>
<keyword id="KW-0479">Metal-binding</keyword>
<keyword id="KW-0645">Protease</keyword>
<keyword id="KW-0964">Secreted</keyword>
<keyword id="KW-0732">Signal</keyword>
<keyword id="KW-0843">Virulence</keyword>
<keyword id="KW-0862">Zinc</keyword>
<keyword id="KW-0865">Zymogen</keyword>
<protein>
    <recommendedName>
        <fullName evidence="17">Secreted aspartic protease 6</fullName>
        <shortName evidence="18">ACP 6</shortName>
        <shortName evidence="18">Aspartate protease 6</shortName>
        <ecNumber evidence="11 16">3.4.23.24</ecNumber>
    </recommendedName>
    <alternativeName>
        <fullName evidence="18">Candidapepsin-6</fullName>
    </alternativeName>
</protein>
<evidence type="ECO:0000250" key="1">
    <source>
        <dbReference type="UniProtKB" id="P0CY27"/>
    </source>
</evidence>
<evidence type="ECO:0000250" key="2">
    <source>
        <dbReference type="UniProtKB" id="P0CY29"/>
    </source>
</evidence>
<evidence type="ECO:0000255" key="3"/>
<evidence type="ECO:0000255" key="4">
    <source>
        <dbReference type="PROSITE-ProRule" id="PRU01103"/>
    </source>
</evidence>
<evidence type="ECO:0000255" key="5">
    <source>
        <dbReference type="PROSITE-ProRule" id="PRU10094"/>
    </source>
</evidence>
<evidence type="ECO:0000269" key="6">
    <source>
    </source>
</evidence>
<evidence type="ECO:0000269" key="7">
    <source>
    </source>
</evidence>
<evidence type="ECO:0000269" key="8">
    <source>
    </source>
</evidence>
<evidence type="ECO:0000269" key="9">
    <source>
    </source>
</evidence>
<evidence type="ECO:0000269" key="10">
    <source>
    </source>
</evidence>
<evidence type="ECO:0000269" key="11">
    <source>
    </source>
</evidence>
<evidence type="ECO:0000269" key="12">
    <source>
    </source>
</evidence>
<evidence type="ECO:0000269" key="13">
    <source>
    </source>
</evidence>
<evidence type="ECO:0000269" key="14">
    <source>
    </source>
</evidence>
<evidence type="ECO:0000269" key="15">
    <source>
    </source>
</evidence>
<evidence type="ECO:0000269" key="16">
    <source>
    </source>
</evidence>
<evidence type="ECO:0000303" key="17">
    <source>
    </source>
</evidence>
<evidence type="ECO:0000305" key="18"/>
<gene>
    <name evidence="17" type="primary">SAP6</name>
</gene>
<feature type="signal peptide" evidence="3">
    <location>
        <begin position="1"/>
        <end position="18"/>
    </location>
</feature>
<feature type="propeptide" id="PRO_0000025858" description="Activation peptide" evidence="3">
    <location>
        <begin position="19"/>
        <end position="76"/>
    </location>
</feature>
<feature type="chain" id="PRO_0000025859" description="Secreted aspartic protease 6">
    <location>
        <begin position="77"/>
        <end position="418"/>
    </location>
</feature>
<feature type="domain" description="Peptidase A1" evidence="4">
    <location>
        <begin position="90"/>
        <end position="404"/>
    </location>
</feature>
<feature type="active site" evidence="5">
    <location>
        <position position="108"/>
    </location>
</feature>
<feature type="active site" evidence="5">
    <location>
        <position position="294"/>
    </location>
</feature>
<feature type="binding site" evidence="2">
    <location>
        <begin position="108"/>
        <end position="110"/>
    </location>
    <ligand>
        <name>pepstatin A</name>
        <dbReference type="ChEBI" id="CHEBI:190525"/>
        <note>inhibitor</note>
    </ligand>
</feature>
<feature type="binding site" evidence="2">
    <location>
        <position position="268"/>
    </location>
    <ligand>
        <name>Zn(2+)</name>
        <dbReference type="ChEBI" id="CHEBI:29105"/>
    </ligand>
</feature>
<feature type="binding site" evidence="2">
    <location>
        <begin position="294"/>
        <end position="298"/>
    </location>
    <ligand>
        <name>pepstatin A</name>
        <dbReference type="ChEBI" id="CHEBI:190525"/>
        <note>inhibitor</note>
    </ligand>
</feature>
<feature type="glycosylation site" description="N-linked (GlcNAc...) asparagine" evidence="3">
    <location>
        <position position="138"/>
    </location>
</feature>
<feature type="disulfide bond" evidence="1">
    <location>
        <begin position="123"/>
        <end position="135"/>
    </location>
</feature>
<feature type="disulfide bond" evidence="1">
    <location>
        <begin position="332"/>
        <end position="370"/>
    </location>
</feature>
<organism>
    <name type="scientific">Candida albicans</name>
    <name type="common">Yeast</name>
    <dbReference type="NCBI Taxonomy" id="5476"/>
    <lineage>
        <taxon>Eukaryota</taxon>
        <taxon>Fungi</taxon>
        <taxon>Dikarya</taxon>
        <taxon>Ascomycota</taxon>
        <taxon>Saccharomycotina</taxon>
        <taxon>Pichiomycetes</taxon>
        <taxon>Debaryomycetaceae</taxon>
        <taxon>Candida/Lodderomyces clade</taxon>
        <taxon>Candida</taxon>
    </lineage>
</organism>
<sequence length="418" mass="45469">MFLKNILSVLRFALLIDAAPVKRSPGFVTLDFNVKRSLVVPDDPTAESKRSPLFLDLDPTQIPVDDTGRNVGVDKRGPVAVKLDNEIITYSADITVGSNNQKLSVIVDTGSSDLWIPDSKAICIPKWRGDCGDFCKNNGSYSPAASSTSKNLNTRFEIKYADGSYAKGNLYQDTVGIGGASVKNQLFANVWSTSAHKGILGIGFQTNEATRTPYDNLPISLKKQGIIAKNAYSLFLNSPEASSGQIIFGGIDKAKYSGSLVELPITSDRTLSVGLRSVNVMGRNVNVNAGVLLDSGTTISYFTPSIARSIIYALGGQVHFDSAGNKAYVADCKTSGTVDFQFDKNLKISVPASEFLYQLYYTNGKPYPKCEIRVRESEDNILGDNFMRSAYIVYDLDDKKISMAQVKYTSESNIVAIN</sequence>